<evidence type="ECO:0000255" key="1">
    <source>
        <dbReference type="HAMAP-Rule" id="MF_00472"/>
    </source>
</evidence>
<comment type="function">
    <text evidence="1">O-methyltransferase that catalyzes the 2 O-methylation steps in the ubiquinone biosynthetic pathway.</text>
</comment>
<comment type="catalytic activity">
    <reaction evidence="1">
        <text>a 3-demethylubiquinol + S-adenosyl-L-methionine = a ubiquinol + S-adenosyl-L-homocysteine + H(+)</text>
        <dbReference type="Rhea" id="RHEA:44380"/>
        <dbReference type="Rhea" id="RHEA-COMP:9566"/>
        <dbReference type="Rhea" id="RHEA-COMP:10914"/>
        <dbReference type="ChEBI" id="CHEBI:15378"/>
        <dbReference type="ChEBI" id="CHEBI:17976"/>
        <dbReference type="ChEBI" id="CHEBI:57856"/>
        <dbReference type="ChEBI" id="CHEBI:59789"/>
        <dbReference type="ChEBI" id="CHEBI:84422"/>
        <dbReference type="EC" id="2.1.1.64"/>
    </reaction>
</comment>
<comment type="catalytic activity">
    <reaction evidence="1">
        <text>a 3-(all-trans-polyprenyl)benzene-1,2-diol + S-adenosyl-L-methionine = a 2-methoxy-6-(all-trans-polyprenyl)phenol + S-adenosyl-L-homocysteine + H(+)</text>
        <dbReference type="Rhea" id="RHEA:31411"/>
        <dbReference type="Rhea" id="RHEA-COMP:9550"/>
        <dbReference type="Rhea" id="RHEA-COMP:9551"/>
        <dbReference type="ChEBI" id="CHEBI:15378"/>
        <dbReference type="ChEBI" id="CHEBI:57856"/>
        <dbReference type="ChEBI" id="CHEBI:59789"/>
        <dbReference type="ChEBI" id="CHEBI:62729"/>
        <dbReference type="ChEBI" id="CHEBI:62731"/>
        <dbReference type="EC" id="2.1.1.222"/>
    </reaction>
</comment>
<comment type="pathway">
    <text evidence="1">Cofactor biosynthesis; ubiquinone biosynthesis.</text>
</comment>
<comment type="similarity">
    <text evidence="1">Belongs to the methyltransferase superfamily. UbiG/COQ3 family.</text>
</comment>
<organism>
    <name type="scientific">Vibrio atlanticus (strain LGP32)</name>
    <name type="common">Vibrio splendidus (strain Mel32)</name>
    <dbReference type="NCBI Taxonomy" id="575788"/>
    <lineage>
        <taxon>Bacteria</taxon>
        <taxon>Pseudomonadati</taxon>
        <taxon>Pseudomonadota</taxon>
        <taxon>Gammaproteobacteria</taxon>
        <taxon>Vibrionales</taxon>
        <taxon>Vibrionaceae</taxon>
        <taxon>Vibrio</taxon>
    </lineage>
</organism>
<accession>B7VGS0</accession>
<keyword id="KW-0489">Methyltransferase</keyword>
<keyword id="KW-0949">S-adenosyl-L-methionine</keyword>
<keyword id="KW-0808">Transferase</keyword>
<keyword id="KW-0831">Ubiquinone biosynthesis</keyword>
<name>UBIG_VIBA3</name>
<protein>
    <recommendedName>
        <fullName evidence="1">Ubiquinone biosynthesis O-methyltransferase</fullName>
    </recommendedName>
    <alternativeName>
        <fullName evidence="1">2-polyprenyl-6-hydroxyphenol methylase</fullName>
        <ecNumber evidence="1">2.1.1.222</ecNumber>
    </alternativeName>
    <alternativeName>
        <fullName evidence="1">3-demethylubiquinone 3-O-methyltransferase</fullName>
        <ecNumber evidence="1">2.1.1.64</ecNumber>
    </alternativeName>
</protein>
<gene>
    <name evidence="1" type="primary">ubiG</name>
    <name type="ordered locus">VS_1937</name>
</gene>
<dbReference type="EC" id="2.1.1.222" evidence="1"/>
<dbReference type="EC" id="2.1.1.64" evidence="1"/>
<dbReference type="EMBL" id="FM954972">
    <property type="protein sequence ID" value="CAV19120.1"/>
    <property type="molecule type" value="Genomic_DNA"/>
</dbReference>
<dbReference type="SMR" id="B7VGS0"/>
<dbReference type="STRING" id="575788.VS_1937"/>
<dbReference type="KEGG" id="vsp:VS_1937"/>
<dbReference type="eggNOG" id="COG2227">
    <property type="taxonomic scope" value="Bacteria"/>
</dbReference>
<dbReference type="HOGENOM" id="CLU_042432_5_0_6"/>
<dbReference type="UniPathway" id="UPA00232"/>
<dbReference type="Proteomes" id="UP000009100">
    <property type="component" value="Chromosome 1"/>
</dbReference>
<dbReference type="GO" id="GO:0102208">
    <property type="term" value="F:2-polyprenyl-6-hydroxyphenol methylase activity"/>
    <property type="evidence" value="ECO:0007669"/>
    <property type="project" value="UniProtKB-EC"/>
</dbReference>
<dbReference type="GO" id="GO:0061542">
    <property type="term" value="F:3-demethylubiquinol 3-O-methyltransferase activity"/>
    <property type="evidence" value="ECO:0007669"/>
    <property type="project" value="UniProtKB-UniRule"/>
</dbReference>
<dbReference type="GO" id="GO:0010420">
    <property type="term" value="F:polyprenyldihydroxybenzoate methyltransferase activity"/>
    <property type="evidence" value="ECO:0007669"/>
    <property type="project" value="InterPro"/>
</dbReference>
<dbReference type="GO" id="GO:0032259">
    <property type="term" value="P:methylation"/>
    <property type="evidence" value="ECO:0007669"/>
    <property type="project" value="UniProtKB-KW"/>
</dbReference>
<dbReference type="CDD" id="cd02440">
    <property type="entry name" value="AdoMet_MTases"/>
    <property type="match status" value="1"/>
</dbReference>
<dbReference type="FunFam" id="3.40.50.150:FF:000028">
    <property type="entry name" value="Ubiquinone biosynthesis O-methyltransferase"/>
    <property type="match status" value="1"/>
</dbReference>
<dbReference type="Gene3D" id="3.40.50.150">
    <property type="entry name" value="Vaccinia Virus protein VP39"/>
    <property type="match status" value="1"/>
</dbReference>
<dbReference type="HAMAP" id="MF_00472">
    <property type="entry name" value="UbiG"/>
    <property type="match status" value="1"/>
</dbReference>
<dbReference type="InterPro" id="IPR029063">
    <property type="entry name" value="SAM-dependent_MTases_sf"/>
</dbReference>
<dbReference type="InterPro" id="IPR010233">
    <property type="entry name" value="UbiG_MeTrfase"/>
</dbReference>
<dbReference type="NCBIfam" id="TIGR01983">
    <property type="entry name" value="UbiG"/>
    <property type="match status" value="1"/>
</dbReference>
<dbReference type="PANTHER" id="PTHR43464">
    <property type="entry name" value="METHYLTRANSFERASE"/>
    <property type="match status" value="1"/>
</dbReference>
<dbReference type="PANTHER" id="PTHR43464:SF19">
    <property type="entry name" value="UBIQUINONE BIOSYNTHESIS O-METHYLTRANSFERASE, MITOCHONDRIAL"/>
    <property type="match status" value="1"/>
</dbReference>
<dbReference type="Pfam" id="PF13489">
    <property type="entry name" value="Methyltransf_23"/>
    <property type="match status" value="1"/>
</dbReference>
<dbReference type="SUPFAM" id="SSF53335">
    <property type="entry name" value="S-adenosyl-L-methionine-dependent methyltransferases"/>
    <property type="match status" value="1"/>
</dbReference>
<feature type="chain" id="PRO_1000135514" description="Ubiquinone biosynthesis O-methyltransferase">
    <location>
        <begin position="1"/>
        <end position="237"/>
    </location>
</feature>
<feature type="binding site" evidence="1">
    <location>
        <position position="39"/>
    </location>
    <ligand>
        <name>S-adenosyl-L-methionine</name>
        <dbReference type="ChEBI" id="CHEBI:59789"/>
    </ligand>
</feature>
<feature type="binding site" evidence="1">
    <location>
        <position position="59"/>
    </location>
    <ligand>
        <name>S-adenosyl-L-methionine</name>
        <dbReference type="ChEBI" id="CHEBI:59789"/>
    </ligand>
</feature>
<feature type="binding site" evidence="1">
    <location>
        <position position="80"/>
    </location>
    <ligand>
        <name>S-adenosyl-L-methionine</name>
        <dbReference type="ChEBI" id="CHEBI:59789"/>
    </ligand>
</feature>
<feature type="binding site" evidence="1">
    <location>
        <position position="124"/>
    </location>
    <ligand>
        <name>S-adenosyl-L-methionine</name>
        <dbReference type="ChEBI" id="CHEBI:59789"/>
    </ligand>
</feature>
<reference key="1">
    <citation type="submission" date="2009-02" db="EMBL/GenBank/DDBJ databases">
        <title>Vibrio splendidus str. LGP32 complete genome.</title>
        <authorList>
            <person name="Mazel D."/>
            <person name="Le Roux F."/>
        </authorList>
    </citation>
    <scope>NUCLEOTIDE SEQUENCE [LARGE SCALE GENOMIC DNA]</scope>
    <source>
        <strain>LGP32</strain>
    </source>
</reference>
<sequence>MTKSQNVDPAEIKKFEDMASRWWDLEGEFKPLHQINPLRLNYVLEKTEGLFGKKVLDVGCGGGILAESMAVEGAVVTGLDMGKEPLEVARLHALETGTKLDYIQSTIEDHAEQNPQAYDVVTCMEMLEHVPDPQSVITACSKLVKPGGHVFFSTLNRNFKSYLFAIVGAEKLLKIVPEGTHDHEKFIRPAELIKMIDNTPLQELGITGLHYNPLTDTYRLGTNVDVNYIVHTQNLTQ</sequence>
<proteinExistence type="inferred from homology"/>